<protein>
    <recommendedName>
        <fullName>S-phase kinase-associated protein 2</fullName>
    </recommendedName>
    <alternativeName>
        <fullName>Cyclin-A/CDK2-associated protein p45</fullName>
    </alternativeName>
    <alternativeName>
        <fullName>F-box protein Skp2</fullName>
    </alternativeName>
    <alternativeName>
        <fullName>F-box/WD-40 protein 1</fullName>
        <shortName>FWD1</shortName>
    </alternativeName>
</protein>
<proteinExistence type="evidence at protein level"/>
<sequence>MHRKHLQEIPDQSGNVTTSFTWGWDSSKTSELLSGMGVSALEKEEVDSENIPHGLLSNLGHPQSPPRKRVKGKGSDKDFVIIRRPKLSRENFPGVSWDSLPDELLLGIFSCLCLPELLRVSGVCKRWYRLSLDESLWQSLDLAGKNLHPDVTVRLLSRGVVAFRCPRSFMEQPLGESFSSFRVQHMDLSNSVINVSNLHKILSECSKLQNLSLEGLQLSDPIVKTLAQNENLVRLNLCGCSGFSESAVATLLSSCSRLDELNLSWCFDFTEKHVQAAVAHLPNTITQLNLSGYRKNLQKTDLCTIIKRCPNLIRLDLSDSIMLKNDCFPEFFQLNYLQHLSLSRCYDIIPDTLLELGEIPTLKTLQVFGIVPEGTLQLLREALPRLQINCAYFTTIARPTMDSKKNLEIWGIKCRLTLQKPSCL</sequence>
<evidence type="ECO:0000250" key="1">
    <source>
        <dbReference type="UniProtKB" id="Q13309"/>
    </source>
</evidence>
<evidence type="ECO:0000255" key="2">
    <source>
        <dbReference type="PROSITE-ProRule" id="PRU00080"/>
    </source>
</evidence>
<evidence type="ECO:0000256" key="3">
    <source>
        <dbReference type="SAM" id="MobiDB-lite"/>
    </source>
</evidence>
<evidence type="ECO:0000269" key="4">
    <source>
    </source>
</evidence>
<evidence type="ECO:0000269" key="5">
    <source>
    </source>
</evidence>
<evidence type="ECO:0000269" key="6">
    <source>
    </source>
</evidence>
<evidence type="ECO:0000303" key="7">
    <source>
    </source>
</evidence>
<evidence type="ECO:0000303" key="8">
    <source>
    </source>
</evidence>
<evidence type="ECO:0000305" key="9"/>
<organism>
    <name type="scientific">Mus musculus</name>
    <name type="common">Mouse</name>
    <dbReference type="NCBI Taxonomy" id="10090"/>
    <lineage>
        <taxon>Eukaryota</taxon>
        <taxon>Metazoa</taxon>
        <taxon>Chordata</taxon>
        <taxon>Craniata</taxon>
        <taxon>Vertebrata</taxon>
        <taxon>Euteleostomi</taxon>
        <taxon>Mammalia</taxon>
        <taxon>Eutheria</taxon>
        <taxon>Euarchontoglires</taxon>
        <taxon>Glires</taxon>
        <taxon>Rodentia</taxon>
        <taxon>Myomorpha</taxon>
        <taxon>Muroidea</taxon>
        <taxon>Muridae</taxon>
        <taxon>Murinae</taxon>
        <taxon>Mus</taxon>
        <taxon>Mus</taxon>
    </lineage>
</organism>
<reference key="1">
    <citation type="journal article" date="2000" name="EMBO J.">
        <title>Targeted disruption of Skp2 results in accumulation of cyclin E and p27(Kip1), polyploidy and centrosome overduplication.</title>
        <authorList>
            <person name="Nakayama K."/>
            <person name="Nagahama H."/>
            <person name="Minamishima Y.A."/>
            <person name="Matsumoto M."/>
            <person name="Nakamichi I."/>
            <person name="Kitagawa K."/>
            <person name="Shirane M."/>
            <person name="Tsunematsu R."/>
            <person name="Tsukiyama T."/>
            <person name="Ishida N."/>
            <person name="Kitagawa M."/>
            <person name="Nakayama K."/>
            <person name="Hatakeyama S."/>
        </authorList>
    </citation>
    <scope>NUCLEOTIDE SEQUENCE [MRNA] (ISOFORM 1)</scope>
    <scope>FUNCTION</scope>
    <scope>INTERACTION WITH CYCLIN-E</scope>
    <source>
        <strain>C57BL/6 X CBA</strain>
        <tissue>Thymus</tissue>
    </source>
</reference>
<reference key="2">
    <citation type="journal article" date="2005" name="Science">
        <title>The transcriptional landscape of the mammalian genome.</title>
        <authorList>
            <person name="Carninci P."/>
            <person name="Kasukawa T."/>
            <person name="Katayama S."/>
            <person name="Gough J."/>
            <person name="Frith M.C."/>
            <person name="Maeda N."/>
            <person name="Oyama R."/>
            <person name="Ravasi T."/>
            <person name="Lenhard B."/>
            <person name="Wells C."/>
            <person name="Kodzius R."/>
            <person name="Shimokawa K."/>
            <person name="Bajic V.B."/>
            <person name="Brenner S.E."/>
            <person name="Batalov S."/>
            <person name="Forrest A.R."/>
            <person name="Zavolan M."/>
            <person name="Davis M.J."/>
            <person name="Wilming L.G."/>
            <person name="Aidinis V."/>
            <person name="Allen J.E."/>
            <person name="Ambesi-Impiombato A."/>
            <person name="Apweiler R."/>
            <person name="Aturaliya R.N."/>
            <person name="Bailey T.L."/>
            <person name="Bansal M."/>
            <person name="Baxter L."/>
            <person name="Beisel K.W."/>
            <person name="Bersano T."/>
            <person name="Bono H."/>
            <person name="Chalk A.M."/>
            <person name="Chiu K.P."/>
            <person name="Choudhary V."/>
            <person name="Christoffels A."/>
            <person name="Clutterbuck D.R."/>
            <person name="Crowe M.L."/>
            <person name="Dalla E."/>
            <person name="Dalrymple B.P."/>
            <person name="de Bono B."/>
            <person name="Della Gatta G."/>
            <person name="di Bernardo D."/>
            <person name="Down T."/>
            <person name="Engstrom P."/>
            <person name="Fagiolini M."/>
            <person name="Faulkner G."/>
            <person name="Fletcher C.F."/>
            <person name="Fukushima T."/>
            <person name="Furuno M."/>
            <person name="Futaki S."/>
            <person name="Gariboldi M."/>
            <person name="Georgii-Hemming P."/>
            <person name="Gingeras T.R."/>
            <person name="Gojobori T."/>
            <person name="Green R.E."/>
            <person name="Gustincich S."/>
            <person name="Harbers M."/>
            <person name="Hayashi Y."/>
            <person name="Hensch T.K."/>
            <person name="Hirokawa N."/>
            <person name="Hill D."/>
            <person name="Huminiecki L."/>
            <person name="Iacono M."/>
            <person name="Ikeo K."/>
            <person name="Iwama A."/>
            <person name="Ishikawa T."/>
            <person name="Jakt M."/>
            <person name="Kanapin A."/>
            <person name="Katoh M."/>
            <person name="Kawasawa Y."/>
            <person name="Kelso J."/>
            <person name="Kitamura H."/>
            <person name="Kitano H."/>
            <person name="Kollias G."/>
            <person name="Krishnan S.P."/>
            <person name="Kruger A."/>
            <person name="Kummerfeld S.K."/>
            <person name="Kurochkin I.V."/>
            <person name="Lareau L.F."/>
            <person name="Lazarevic D."/>
            <person name="Lipovich L."/>
            <person name="Liu J."/>
            <person name="Liuni S."/>
            <person name="McWilliam S."/>
            <person name="Madan Babu M."/>
            <person name="Madera M."/>
            <person name="Marchionni L."/>
            <person name="Matsuda H."/>
            <person name="Matsuzawa S."/>
            <person name="Miki H."/>
            <person name="Mignone F."/>
            <person name="Miyake S."/>
            <person name="Morris K."/>
            <person name="Mottagui-Tabar S."/>
            <person name="Mulder N."/>
            <person name="Nakano N."/>
            <person name="Nakauchi H."/>
            <person name="Ng P."/>
            <person name="Nilsson R."/>
            <person name="Nishiguchi S."/>
            <person name="Nishikawa S."/>
            <person name="Nori F."/>
            <person name="Ohara O."/>
            <person name="Okazaki Y."/>
            <person name="Orlando V."/>
            <person name="Pang K.C."/>
            <person name="Pavan W.J."/>
            <person name="Pavesi G."/>
            <person name="Pesole G."/>
            <person name="Petrovsky N."/>
            <person name="Piazza S."/>
            <person name="Reed J."/>
            <person name="Reid J.F."/>
            <person name="Ring B.Z."/>
            <person name="Ringwald M."/>
            <person name="Rost B."/>
            <person name="Ruan Y."/>
            <person name="Salzberg S.L."/>
            <person name="Sandelin A."/>
            <person name="Schneider C."/>
            <person name="Schoenbach C."/>
            <person name="Sekiguchi K."/>
            <person name="Semple C.A."/>
            <person name="Seno S."/>
            <person name="Sessa L."/>
            <person name="Sheng Y."/>
            <person name="Shibata Y."/>
            <person name="Shimada H."/>
            <person name="Shimada K."/>
            <person name="Silva D."/>
            <person name="Sinclair B."/>
            <person name="Sperling S."/>
            <person name="Stupka E."/>
            <person name="Sugiura K."/>
            <person name="Sultana R."/>
            <person name="Takenaka Y."/>
            <person name="Taki K."/>
            <person name="Tammoja K."/>
            <person name="Tan S.L."/>
            <person name="Tang S."/>
            <person name="Taylor M.S."/>
            <person name="Tegner J."/>
            <person name="Teichmann S.A."/>
            <person name="Ueda H.R."/>
            <person name="van Nimwegen E."/>
            <person name="Verardo R."/>
            <person name="Wei C.L."/>
            <person name="Yagi K."/>
            <person name="Yamanishi H."/>
            <person name="Zabarovsky E."/>
            <person name="Zhu S."/>
            <person name="Zimmer A."/>
            <person name="Hide W."/>
            <person name="Bult C."/>
            <person name="Grimmond S.M."/>
            <person name="Teasdale R.D."/>
            <person name="Liu E.T."/>
            <person name="Brusic V."/>
            <person name="Quackenbush J."/>
            <person name="Wahlestedt C."/>
            <person name="Mattick J.S."/>
            <person name="Hume D.A."/>
            <person name="Kai C."/>
            <person name="Sasaki D."/>
            <person name="Tomaru Y."/>
            <person name="Fukuda S."/>
            <person name="Kanamori-Katayama M."/>
            <person name="Suzuki M."/>
            <person name="Aoki J."/>
            <person name="Arakawa T."/>
            <person name="Iida J."/>
            <person name="Imamura K."/>
            <person name="Itoh M."/>
            <person name="Kato T."/>
            <person name="Kawaji H."/>
            <person name="Kawagashira N."/>
            <person name="Kawashima T."/>
            <person name="Kojima M."/>
            <person name="Kondo S."/>
            <person name="Konno H."/>
            <person name="Nakano K."/>
            <person name="Ninomiya N."/>
            <person name="Nishio T."/>
            <person name="Okada M."/>
            <person name="Plessy C."/>
            <person name="Shibata K."/>
            <person name="Shiraki T."/>
            <person name="Suzuki S."/>
            <person name="Tagami M."/>
            <person name="Waki K."/>
            <person name="Watahiki A."/>
            <person name="Okamura-Oho Y."/>
            <person name="Suzuki H."/>
            <person name="Kawai J."/>
            <person name="Hayashizaki Y."/>
        </authorList>
    </citation>
    <scope>NUCLEOTIDE SEQUENCE [LARGE SCALE MRNA] (ISOFORMS 1; 2 AND 3)</scope>
    <source>
        <strain>C57BL/6J</strain>
        <tissue>Mesonephros</tissue>
        <tissue>Retina</tissue>
        <tissue>Vagina</tissue>
    </source>
</reference>
<reference key="3">
    <citation type="journal article" date="2004" name="Genome Res.">
        <title>The status, quality, and expansion of the NIH full-length cDNA project: the Mammalian Gene Collection (MGC).</title>
        <authorList>
            <consortium name="The MGC Project Team"/>
        </authorList>
    </citation>
    <scope>NUCLEOTIDE SEQUENCE [LARGE SCALE MRNA] (ISOFORM 3)</scope>
    <source>
        <tissue>Mammary gland</tissue>
    </source>
</reference>
<reference key="4">
    <citation type="journal article" date="2012" name="Mol. Cell">
        <title>Skp2 E3 ligase integrates ATM activation and homologous recombination repair by ubiquitinating NBS1.</title>
        <authorList>
            <person name="Wu J."/>
            <person name="Zhang X."/>
            <person name="Zhang L."/>
            <person name="Wu C.Y."/>
            <person name="Rezaeian A.H."/>
            <person name="Chan C.H."/>
            <person name="Li J.M."/>
            <person name="Wang J."/>
            <person name="Gao Y."/>
            <person name="Han F."/>
            <person name="Jeong Y.S."/>
            <person name="Yuan X."/>
            <person name="Khanna K.K."/>
            <person name="Jin J."/>
            <person name="Zeng Y.X."/>
            <person name="Lin H.K."/>
        </authorList>
    </citation>
    <scope>FUNCTION</scope>
    <scope>PATHWAY</scope>
</reference>
<reference key="5">
    <citation type="journal article" date="2018" name="Genes Dev.">
        <title>A C9orf72-CARM1 axis regulates lipid metabolism under glucose starvation-induced nutrient stress.</title>
        <authorList>
            <person name="Liu Y."/>
            <person name="Wang T."/>
            <person name="Ji Y.J."/>
            <person name="Johnson K."/>
            <person name="Liu H."/>
            <person name="Johnson K."/>
            <person name="Bailey S."/>
            <person name="Suk Y."/>
            <person name="Lu Y.N."/>
            <person name="Liu M."/>
            <person name="Wang J."/>
        </authorList>
    </citation>
    <scope>INTERACTION WITH CARM1</scope>
</reference>
<dbReference type="EMBL" id="AF083215">
    <property type="protein sequence ID" value="AAD16037.1"/>
    <property type="molecule type" value="mRNA"/>
</dbReference>
<dbReference type="EMBL" id="AK032979">
    <property type="protein sequence ID" value="BAC28108.1"/>
    <property type="molecule type" value="mRNA"/>
</dbReference>
<dbReference type="EMBL" id="AK044212">
    <property type="protein sequence ID" value="BAC31819.1"/>
    <property type="molecule type" value="mRNA"/>
</dbReference>
<dbReference type="EMBL" id="AK037002">
    <property type="status" value="NOT_ANNOTATED_CDS"/>
    <property type="molecule type" value="mRNA"/>
</dbReference>
<dbReference type="EMBL" id="BC003468">
    <property type="protein sequence ID" value="AAH03468.1"/>
    <property type="molecule type" value="mRNA"/>
</dbReference>
<dbReference type="CCDS" id="CCDS37037.1">
    <molecule id="Q9Z0Z3-1"/>
</dbReference>
<dbReference type="RefSeq" id="NP_038815.1">
    <molecule id="Q9Z0Z3-1"/>
    <property type="nucleotide sequence ID" value="NM_013787.3"/>
</dbReference>
<dbReference type="SMR" id="Q9Z0Z3"/>
<dbReference type="BioGRID" id="205208">
    <property type="interactions" value="14"/>
</dbReference>
<dbReference type="FunCoup" id="Q9Z0Z3">
    <property type="interactions" value="3294"/>
</dbReference>
<dbReference type="STRING" id="10090.ENSMUSP00000094225"/>
<dbReference type="iPTMnet" id="Q9Z0Z3"/>
<dbReference type="PhosphoSitePlus" id="Q9Z0Z3"/>
<dbReference type="jPOST" id="Q9Z0Z3"/>
<dbReference type="PaxDb" id="10090-ENSMUSP00000094225"/>
<dbReference type="ProteomicsDB" id="257026">
    <molecule id="Q9Z0Z3-1"/>
</dbReference>
<dbReference type="ProteomicsDB" id="257027">
    <molecule id="Q9Z0Z3-2"/>
</dbReference>
<dbReference type="ProteomicsDB" id="257028">
    <molecule id="Q9Z0Z3-3"/>
</dbReference>
<dbReference type="Pumba" id="Q9Z0Z3"/>
<dbReference type="Antibodypedia" id="22921">
    <property type="antibodies" value="463 antibodies from 41 providers"/>
</dbReference>
<dbReference type="DNASU" id="27401"/>
<dbReference type="Ensembl" id="ENSMUST00000096482.10">
    <molecule id="Q9Z0Z3-1"/>
    <property type="protein sequence ID" value="ENSMUSP00000094225.4"/>
    <property type="gene ID" value="ENSMUSG00000054115.13"/>
</dbReference>
<dbReference type="Ensembl" id="ENSMUST00000110585.10">
    <molecule id="Q9Z0Z3-2"/>
    <property type="protein sequence ID" value="ENSMUSP00000106215.3"/>
    <property type="gene ID" value="ENSMUSG00000054115.13"/>
</dbReference>
<dbReference type="GeneID" id="27401"/>
<dbReference type="KEGG" id="mmu:27401"/>
<dbReference type="UCSC" id="uc007vff.2">
    <molecule id="Q9Z0Z3-1"/>
    <property type="organism name" value="mouse"/>
</dbReference>
<dbReference type="UCSC" id="uc007vfi.3">
    <molecule id="Q9Z0Z3-3"/>
    <property type="organism name" value="mouse"/>
</dbReference>
<dbReference type="AGR" id="MGI:1351663"/>
<dbReference type="CTD" id="6502"/>
<dbReference type="MGI" id="MGI:1351663">
    <property type="gene designation" value="Skp2"/>
</dbReference>
<dbReference type="VEuPathDB" id="HostDB:ENSMUSG00000054115"/>
<dbReference type="eggNOG" id="KOG2120">
    <property type="taxonomic scope" value="Eukaryota"/>
</dbReference>
<dbReference type="GeneTree" id="ENSGT00390000007918"/>
<dbReference type="HOGENOM" id="CLU_032515_2_0_1"/>
<dbReference type="InParanoid" id="Q9Z0Z3"/>
<dbReference type="OMA" id="CDFTADH"/>
<dbReference type="OrthoDB" id="2095648at2759"/>
<dbReference type="PhylomeDB" id="Q9Z0Z3"/>
<dbReference type="TreeFam" id="TF352582"/>
<dbReference type="Reactome" id="R-MMU-174178">
    <property type="pathway name" value="APC/C:Cdh1 mediated degradation of Cdc20 and other APC/C:Cdh1 targeted proteins in late mitosis/early G1"/>
</dbReference>
<dbReference type="Reactome" id="R-MMU-187577">
    <property type="pathway name" value="SCF(Skp2)-mediated degradation of p27/p21"/>
</dbReference>
<dbReference type="Reactome" id="R-MMU-5689880">
    <property type="pathway name" value="Ub-specific processing proteases"/>
</dbReference>
<dbReference type="Reactome" id="R-MMU-68949">
    <property type="pathway name" value="Orc1 removal from chromatin"/>
</dbReference>
<dbReference type="Reactome" id="R-MMU-69231">
    <property type="pathway name" value="Cyclin D associated events in G1"/>
</dbReference>
<dbReference type="Reactome" id="R-MMU-8939902">
    <property type="pathway name" value="Regulation of RUNX2 expression and activity"/>
</dbReference>
<dbReference type="Reactome" id="R-MMU-8951664">
    <property type="pathway name" value="Neddylation"/>
</dbReference>
<dbReference type="Reactome" id="R-MMU-9708530">
    <property type="pathway name" value="Regulation of BACH1 activity"/>
</dbReference>
<dbReference type="Reactome" id="R-MMU-983168">
    <property type="pathway name" value="Antigen processing: Ubiquitination &amp; Proteasome degradation"/>
</dbReference>
<dbReference type="UniPathway" id="UPA00143"/>
<dbReference type="BioGRID-ORCS" id="27401">
    <property type="hits" value="18 hits in 79 CRISPR screens"/>
</dbReference>
<dbReference type="ChiTaRS" id="Skp2">
    <property type="organism name" value="mouse"/>
</dbReference>
<dbReference type="PRO" id="PR:Q9Z0Z3"/>
<dbReference type="Proteomes" id="UP000000589">
    <property type="component" value="Chromosome 15"/>
</dbReference>
<dbReference type="RNAct" id="Q9Z0Z3">
    <property type="molecule type" value="protein"/>
</dbReference>
<dbReference type="Bgee" id="ENSMUSG00000054115">
    <property type="expression patterns" value="Expressed in maxillary prominence and 237 other cell types or tissues"/>
</dbReference>
<dbReference type="ExpressionAtlas" id="Q9Z0Z3">
    <property type="expression patterns" value="baseline and differential"/>
</dbReference>
<dbReference type="GO" id="GO:0005829">
    <property type="term" value="C:cytosol"/>
    <property type="evidence" value="ECO:0007669"/>
    <property type="project" value="Ensembl"/>
</dbReference>
<dbReference type="GO" id="GO:0005730">
    <property type="term" value="C:nucleolus"/>
    <property type="evidence" value="ECO:0007669"/>
    <property type="project" value="Ensembl"/>
</dbReference>
<dbReference type="GO" id="GO:0005654">
    <property type="term" value="C:nucleoplasm"/>
    <property type="evidence" value="ECO:0007669"/>
    <property type="project" value="Ensembl"/>
</dbReference>
<dbReference type="GO" id="GO:0019005">
    <property type="term" value="C:SCF ubiquitin ligase complex"/>
    <property type="evidence" value="ECO:0000314"/>
    <property type="project" value="UniProtKB"/>
</dbReference>
<dbReference type="GO" id="GO:0042802">
    <property type="term" value="F:identical protein binding"/>
    <property type="evidence" value="ECO:0007669"/>
    <property type="project" value="Ensembl"/>
</dbReference>
<dbReference type="GO" id="GO:1990756">
    <property type="term" value="F:ubiquitin-like ligase-substrate adaptor activity"/>
    <property type="evidence" value="ECO:0000314"/>
    <property type="project" value="UniProtKB"/>
</dbReference>
<dbReference type="GO" id="GO:0071460">
    <property type="term" value="P:cellular response to cell-matrix adhesion"/>
    <property type="evidence" value="ECO:0007669"/>
    <property type="project" value="Ensembl"/>
</dbReference>
<dbReference type="GO" id="GO:0051607">
    <property type="term" value="P:defense response to virus"/>
    <property type="evidence" value="ECO:0007669"/>
    <property type="project" value="Ensembl"/>
</dbReference>
<dbReference type="GO" id="GO:0000082">
    <property type="term" value="P:G1/S transition of mitotic cell cycle"/>
    <property type="evidence" value="ECO:0000314"/>
    <property type="project" value="MGI"/>
</dbReference>
<dbReference type="GO" id="GO:0000086">
    <property type="term" value="P:G2/M transition of mitotic cell cycle"/>
    <property type="evidence" value="ECO:0000315"/>
    <property type="project" value="MGI"/>
</dbReference>
<dbReference type="GO" id="GO:0045087">
    <property type="term" value="P:innate immune response"/>
    <property type="evidence" value="ECO:0007669"/>
    <property type="project" value="Ensembl"/>
</dbReference>
<dbReference type="GO" id="GO:1905168">
    <property type="term" value="P:positive regulation of double-strand break repair via homologous recombination"/>
    <property type="evidence" value="ECO:0000314"/>
    <property type="project" value="UniProtKB"/>
</dbReference>
<dbReference type="GO" id="GO:0033148">
    <property type="term" value="P:positive regulation of intracellular estrogen receptor signaling pathway"/>
    <property type="evidence" value="ECO:0000316"/>
    <property type="project" value="MGI"/>
</dbReference>
<dbReference type="GO" id="GO:1902916">
    <property type="term" value="P:positive regulation of protein polyubiquitination"/>
    <property type="evidence" value="ECO:0000314"/>
    <property type="project" value="MGI"/>
</dbReference>
<dbReference type="GO" id="GO:0048661">
    <property type="term" value="P:positive regulation of smooth muscle cell proliferation"/>
    <property type="evidence" value="ECO:0007669"/>
    <property type="project" value="Ensembl"/>
</dbReference>
<dbReference type="GO" id="GO:0043161">
    <property type="term" value="P:proteasome-mediated ubiquitin-dependent protein catabolic process"/>
    <property type="evidence" value="ECO:0000250"/>
    <property type="project" value="UniProtKB"/>
</dbReference>
<dbReference type="GO" id="GO:0070936">
    <property type="term" value="P:protein K48-linked ubiquitination"/>
    <property type="evidence" value="ECO:0000250"/>
    <property type="project" value="UniProtKB"/>
</dbReference>
<dbReference type="GO" id="GO:0070534">
    <property type="term" value="P:protein K63-linked ubiquitination"/>
    <property type="evidence" value="ECO:0000314"/>
    <property type="project" value="UniProtKB"/>
</dbReference>
<dbReference type="GO" id="GO:0000209">
    <property type="term" value="P:protein polyubiquitination"/>
    <property type="evidence" value="ECO:0000314"/>
    <property type="project" value="MGI"/>
</dbReference>
<dbReference type="GO" id="GO:0042981">
    <property type="term" value="P:regulation of apoptotic process"/>
    <property type="evidence" value="ECO:0000266"/>
    <property type="project" value="MGI"/>
</dbReference>
<dbReference type="GO" id="GO:0051726">
    <property type="term" value="P:regulation of cell cycle"/>
    <property type="evidence" value="ECO:0000353"/>
    <property type="project" value="MGI"/>
</dbReference>
<dbReference type="GO" id="GO:0006511">
    <property type="term" value="P:ubiquitin-dependent protein catabolic process"/>
    <property type="evidence" value="ECO:0000314"/>
    <property type="project" value="MGI"/>
</dbReference>
<dbReference type="CDD" id="cd22114">
    <property type="entry name" value="F-box_FBXL1"/>
    <property type="match status" value="1"/>
</dbReference>
<dbReference type="FunFam" id="3.80.10.10:FF:000105">
    <property type="entry name" value="S-phase kinase-associated protein 2"/>
    <property type="match status" value="1"/>
</dbReference>
<dbReference type="Gene3D" id="3.80.10.10">
    <property type="entry name" value="Ribonuclease Inhibitor"/>
    <property type="match status" value="1"/>
</dbReference>
<dbReference type="InterPro" id="IPR036047">
    <property type="entry name" value="F-box-like_dom_sf"/>
</dbReference>
<dbReference type="InterPro" id="IPR001810">
    <property type="entry name" value="F-box_dom"/>
</dbReference>
<dbReference type="InterPro" id="IPR006553">
    <property type="entry name" value="Leu-rich_rpt_Cys-con_subtyp"/>
</dbReference>
<dbReference type="InterPro" id="IPR032675">
    <property type="entry name" value="LRR_dom_sf"/>
</dbReference>
<dbReference type="PANTHER" id="PTHR46976">
    <property type="entry name" value="PROTEIN ARABIDILLO 1"/>
    <property type="match status" value="1"/>
</dbReference>
<dbReference type="PANTHER" id="PTHR46976:SF1">
    <property type="entry name" value="PROTEIN ARABIDILLO 1"/>
    <property type="match status" value="1"/>
</dbReference>
<dbReference type="Pfam" id="PF12937">
    <property type="entry name" value="F-box-like"/>
    <property type="match status" value="1"/>
</dbReference>
<dbReference type="SMART" id="SM00256">
    <property type="entry name" value="FBOX"/>
    <property type="match status" value="1"/>
</dbReference>
<dbReference type="SMART" id="SM00367">
    <property type="entry name" value="LRR_CC"/>
    <property type="match status" value="4"/>
</dbReference>
<dbReference type="SUPFAM" id="SSF81383">
    <property type="entry name" value="F-box domain"/>
    <property type="match status" value="1"/>
</dbReference>
<dbReference type="SUPFAM" id="SSF52047">
    <property type="entry name" value="RNI-like"/>
    <property type="match status" value="1"/>
</dbReference>
<dbReference type="PROSITE" id="PS50181">
    <property type="entry name" value="FBOX"/>
    <property type="match status" value="1"/>
</dbReference>
<feature type="chain" id="PRO_0000119955" description="S-phase kinase-associated protein 2">
    <location>
        <begin position="1"/>
        <end position="424"/>
    </location>
</feature>
<feature type="domain" description="F-box" evidence="2">
    <location>
        <begin position="94"/>
        <end position="140"/>
    </location>
</feature>
<feature type="repeat" description="LRR 1">
    <location>
        <begin position="151"/>
        <end position="176"/>
    </location>
</feature>
<feature type="repeat" description="LRR 2">
    <location>
        <begin position="177"/>
        <end position="204"/>
    </location>
</feature>
<feature type="repeat" description="LRR 3">
    <location>
        <begin position="210"/>
        <end position="234"/>
    </location>
</feature>
<feature type="repeat" description="LRR 4">
    <location>
        <begin position="235"/>
        <end position="257"/>
    </location>
</feature>
<feature type="repeat" description="LRR 5">
    <location>
        <begin position="258"/>
        <end position="284"/>
    </location>
</feature>
<feature type="repeat" description="LRR 6">
    <location>
        <begin position="286"/>
        <end position="308"/>
    </location>
</feature>
<feature type="repeat" description="LRR 7">
    <location>
        <begin position="309"/>
        <end position="330"/>
    </location>
</feature>
<feature type="repeat" description="LRR 8">
    <location>
        <begin position="334"/>
        <end position="356"/>
    </location>
</feature>
<feature type="repeat" description="LRR 9">
    <location>
        <begin position="359"/>
        <end position="378"/>
    </location>
</feature>
<feature type="repeat" description="LRR 10">
    <location>
        <begin position="380"/>
        <end position="401"/>
    </location>
</feature>
<feature type="region of interest" description="Disordered" evidence="3">
    <location>
        <begin position="52"/>
        <end position="73"/>
    </location>
</feature>
<feature type="short sequence motif" description="Nuclear localization signal" evidence="1">
    <location>
        <begin position="67"/>
        <end position="73"/>
    </location>
</feature>
<feature type="modified residue" description="Phosphoserine" evidence="1">
    <location>
        <position position="64"/>
    </location>
</feature>
<feature type="modified residue" description="N6-acetyllysine; by p300/EP300" evidence="1">
    <location>
        <position position="68"/>
    </location>
</feature>
<feature type="modified residue" description="N6-acetyllysine; by p300/EP300" evidence="1">
    <location>
        <position position="71"/>
    </location>
</feature>
<feature type="modified residue" description="Phosphoserine" evidence="1">
    <location>
        <position position="75"/>
    </location>
</feature>
<feature type="modified residue" description="Phosphoserine" evidence="1">
    <location>
        <position position="179"/>
    </location>
</feature>
<feature type="splice variant" id="VSP_008433" description="In isoform 3." evidence="7 8">
    <location>
        <begin position="132"/>
        <end position="424"/>
    </location>
</feature>
<feature type="splice variant" id="VSP_008434" description="In isoform 2." evidence="8">
    <location>
        <begin position="355"/>
        <end position="424"/>
    </location>
</feature>
<feature type="sequence conflict" description="In Ref. 2; BAC28108." evidence="9" ref="2">
    <original>L</original>
    <variation>H</variation>
    <location>
        <position position="340"/>
    </location>
</feature>
<feature type="sequence conflict" description="In Ref. 2; BAC31819." evidence="9" ref="2">
    <original>L</original>
    <variation>V</variation>
    <location>
        <position position="353"/>
    </location>
</feature>
<gene>
    <name type="primary">Skp2</name>
</gene>
<comment type="function">
    <text evidence="1 4 5">Substrate recognition component of a SCF (SKP1-CUL1-F-box protein) E3 ubiquitin-protein ligase complex which mediates the ubiquitination and subsequent proteasomal degradation of target proteins involved in cell cycle progression, signal transduction and transcription (PubMed:22464731). Specifically recognizes phosphorylated CDKN1B/p27kip and is involved in regulation of G1/S transition (PubMed:10790373). Degradation of CDKN1B/p27kip also requires CKS1 (PubMed:10790373). Recognizes target proteins ORC1, CDT1, RBL2, KMT2A/MLL1, CDK9, RAG2, NBN, FOXO1, UBP43, YTHDF2, and probably MYC, TOB1 and TAL1 (PubMed:22464731). Degradation of TAL1 also requires STUB1 (By similarity). Recognizes CDKN1A in association with CCNE1 or CCNE2 and CDK2 (By similarity). Promotes ubiquitination and destruction of CDH1 in a CK1-dependent manner, thereby regulating cell migration (By similarity). Following phosphorylation in response to DNA damage, mediates 'Lys-63'-linked ubiquitination of NBN, promoting ATM recruitment to DNA damage sites and DNA repair via homologous recombination (PubMed:22464731).</text>
</comment>
<comment type="function">
    <text evidence="1">Through the ubiquitin-mediated proteasomal degradation of viral proteins may have an antiviral activity.</text>
</comment>
<comment type="pathway">
    <text evidence="5">Protein modification; protein ubiquitination.</text>
</comment>
<comment type="subunit">
    <text evidence="1 4 6">Part of a SCF(SKP2) complex consisting of CUL1, RBX1, SKP1 and SKP2. Component of a SCF(SKP2)-like complex containing CUL1, SKP1, TRIM21 and SKP2. Interacts directly with CUL1 and SKP1. Interacts with ASB2 which is the substrate-recognition component of a probable ECS E3 ubiquitin-protein ligase complex; ASB2 is likely to bridge the formation of dimeric E3-ubiquitin-protein ligase complexes composed of an ECS complex and an SCF(SKP2) complex. Interacts with CKS1. Interacts with the cyclin-A-CDK2 complex. Interacts with ORC1, phosphorylated CDT1, phosphorylated RBL2, ELF4, phosphorylated RAG2, FOXO1, UBP43, MYC, TOB1, TAL1 and KMT2A/MLL1. Interacts with TRIM21 (By similarity). Interacts with cyclin-E (PubMed:10790373). Interacts with CARM1 (PubMed:30366907).</text>
</comment>
<comment type="subcellular location">
    <subcellularLocation>
        <location evidence="1">Cytoplasm</location>
    </subcellularLocation>
    <subcellularLocation>
        <location evidence="1">Nucleus</location>
    </subcellularLocation>
</comment>
<comment type="alternative products">
    <event type="alternative splicing"/>
    <isoform>
        <id>Q9Z0Z3-1</id>
        <name>1</name>
        <sequence type="displayed"/>
    </isoform>
    <isoform>
        <id>Q9Z0Z3-2</id>
        <name>2</name>
        <sequence type="described" ref="VSP_008434"/>
    </isoform>
    <isoform>
        <id>Q9Z0Z3-3</id>
        <name>3</name>
        <sequence type="described" ref="VSP_008433"/>
    </isoform>
</comment>
<comment type="PTM">
    <text evidence="5">Phosphorylated on serine and threonine resudues in response to DNA damage, promoting 'Lys-63'-linked ubiquitination of NBN.</text>
</comment>
<comment type="PTM">
    <text evidence="1">Ubiquitinated by the APC/C complex, leading to its degradation by the proteasome. Deubiquitinated by USP13 (By similarity).</text>
</comment>
<comment type="PTM">
    <text evidence="1">Acetylation at Lys-68 and Lys-71 increases stability through impairment of APC/C-mediated proteolysis and promotes cytoplasmic retention. Deacetylated by SIRT3 (By similarity).</text>
</comment>
<keyword id="KW-0007">Acetylation</keyword>
<keyword id="KW-0025">Alternative splicing</keyword>
<keyword id="KW-0963">Cytoplasm</keyword>
<keyword id="KW-0433">Leucine-rich repeat</keyword>
<keyword id="KW-0539">Nucleus</keyword>
<keyword id="KW-0597">Phosphoprotein</keyword>
<keyword id="KW-1185">Reference proteome</keyword>
<keyword id="KW-0677">Repeat</keyword>
<keyword id="KW-0832">Ubl conjugation</keyword>
<keyword id="KW-0833">Ubl conjugation pathway</keyword>
<accession>Q9Z0Z3</accession>
<accession>Q8BSG7</accession>
<accession>Q8C8Y9</accession>
<accession>Q8CB22</accession>
<accession>Q99J53</accession>
<name>SKP2_MOUSE</name>